<accession>B0VQD6</accession>
<name>PQQD_ACIBS</name>
<proteinExistence type="inferred from homology"/>
<organism>
    <name type="scientific">Acinetobacter baumannii (strain SDF)</name>
    <dbReference type="NCBI Taxonomy" id="509170"/>
    <lineage>
        <taxon>Bacteria</taxon>
        <taxon>Pseudomonadati</taxon>
        <taxon>Pseudomonadota</taxon>
        <taxon>Gammaproteobacteria</taxon>
        <taxon>Moraxellales</taxon>
        <taxon>Moraxellaceae</taxon>
        <taxon>Acinetobacter</taxon>
        <taxon>Acinetobacter calcoaceticus/baumannii complex</taxon>
    </lineage>
</organism>
<evidence type="ECO:0000255" key="1">
    <source>
        <dbReference type="HAMAP-Rule" id="MF_00655"/>
    </source>
</evidence>
<reference key="1">
    <citation type="journal article" date="2008" name="PLoS ONE">
        <title>Comparative analysis of Acinetobacters: three genomes for three lifestyles.</title>
        <authorList>
            <person name="Vallenet D."/>
            <person name="Nordmann P."/>
            <person name="Barbe V."/>
            <person name="Poirel L."/>
            <person name="Mangenot S."/>
            <person name="Bataille E."/>
            <person name="Dossat C."/>
            <person name="Gas S."/>
            <person name="Kreimeyer A."/>
            <person name="Lenoble P."/>
            <person name="Oztas S."/>
            <person name="Poulain J."/>
            <person name="Segurens B."/>
            <person name="Robert C."/>
            <person name="Abergel C."/>
            <person name="Claverie J.-M."/>
            <person name="Raoult D."/>
            <person name="Medigue C."/>
            <person name="Weissenbach J."/>
            <person name="Cruveiller S."/>
        </authorList>
    </citation>
    <scope>NUCLEOTIDE SEQUENCE [LARGE SCALE GENOMIC DNA]</scope>
    <source>
        <strain>SDF</strain>
    </source>
</reference>
<gene>
    <name evidence="1" type="primary">pqqD</name>
    <name type="ordered locus">ABSDF1982</name>
</gene>
<dbReference type="EMBL" id="CU468230">
    <property type="protein sequence ID" value="CAP01315.1"/>
    <property type="molecule type" value="Genomic_DNA"/>
</dbReference>
<dbReference type="SMR" id="B0VQD6"/>
<dbReference type="KEGG" id="abm:ABSDF1982"/>
<dbReference type="HOGENOM" id="CLU_163864_2_1_6"/>
<dbReference type="UniPathway" id="UPA00539"/>
<dbReference type="Proteomes" id="UP000001741">
    <property type="component" value="Chromosome"/>
</dbReference>
<dbReference type="GO" id="GO:0048038">
    <property type="term" value="F:quinone binding"/>
    <property type="evidence" value="ECO:0007669"/>
    <property type="project" value="InterPro"/>
</dbReference>
<dbReference type="GO" id="GO:0018189">
    <property type="term" value="P:pyrroloquinoline quinone biosynthetic process"/>
    <property type="evidence" value="ECO:0007669"/>
    <property type="project" value="UniProtKB-UniRule"/>
</dbReference>
<dbReference type="Gene3D" id="1.10.10.1150">
    <property type="entry name" value="Coenzyme PQQ synthesis protein D (PqqD)"/>
    <property type="match status" value="1"/>
</dbReference>
<dbReference type="HAMAP" id="MF_00655">
    <property type="entry name" value="PQQ_syn_PqqD"/>
    <property type="match status" value="1"/>
</dbReference>
<dbReference type="InterPro" id="IPR008792">
    <property type="entry name" value="PQQD"/>
</dbReference>
<dbReference type="InterPro" id="IPR022479">
    <property type="entry name" value="PqqD_bac"/>
</dbReference>
<dbReference type="InterPro" id="IPR041881">
    <property type="entry name" value="PqqD_sf"/>
</dbReference>
<dbReference type="NCBIfam" id="TIGR03859">
    <property type="entry name" value="PQQ_PqqD"/>
    <property type="match status" value="1"/>
</dbReference>
<dbReference type="NCBIfam" id="NF002535">
    <property type="entry name" value="PRK02079.1"/>
    <property type="match status" value="1"/>
</dbReference>
<dbReference type="Pfam" id="PF05402">
    <property type="entry name" value="PqqD"/>
    <property type="match status" value="1"/>
</dbReference>
<comment type="function">
    <text evidence="1">Functions as a PqqA binding protein and presents PqqA to PqqE, in the pyrroloquinoline quinone (PQQ) biosynthetic pathway.</text>
</comment>
<comment type="pathway">
    <text evidence="1">Cofactor biosynthesis; pyrroloquinoline quinone biosynthesis.</text>
</comment>
<comment type="subunit">
    <text evidence="1">Monomer. Interacts with PqqE.</text>
</comment>
<comment type="similarity">
    <text evidence="1">Belongs to the PqqD family.</text>
</comment>
<feature type="chain" id="PRO_1000131186" description="PqqA binding protein">
    <location>
        <begin position="1"/>
        <end position="94"/>
    </location>
</feature>
<sequence>MNKEQFDVNLVPTWRQGYRFQFEPAQNGFVILYPEGMIKLNESAGAIGQYIDGKNNVSAIIAQLKQQFGDVAEIDNDVIDYMLVAQQQHWIDLV</sequence>
<protein>
    <recommendedName>
        <fullName evidence="1">PqqA binding protein</fullName>
    </recommendedName>
    <alternativeName>
        <fullName evidence="1">Coenzyme PQQ synthesis protein D</fullName>
    </alternativeName>
    <alternativeName>
        <fullName evidence="1">Pyrroloquinoline quinone biosynthesis protein D</fullName>
    </alternativeName>
</protein>
<keyword id="KW-0884">PQQ biosynthesis</keyword>